<accession>Q9AU10</accession>
<organism>
    <name type="scientific">Rubus idaeus</name>
    <name type="common">Raspberry</name>
    <dbReference type="NCBI Taxonomy" id="32247"/>
    <lineage>
        <taxon>Eukaryota</taxon>
        <taxon>Viridiplantae</taxon>
        <taxon>Streptophyta</taxon>
        <taxon>Embryophyta</taxon>
        <taxon>Tracheophyta</taxon>
        <taxon>Spermatophyta</taxon>
        <taxon>Magnoliopsida</taxon>
        <taxon>eudicotyledons</taxon>
        <taxon>Gunneridae</taxon>
        <taxon>Pentapetalae</taxon>
        <taxon>rosids</taxon>
        <taxon>fabids</taxon>
        <taxon>Rosales</taxon>
        <taxon>Rosaceae</taxon>
        <taxon>Rosoideae</taxon>
        <taxon>Rosoideae incertae sedis</taxon>
        <taxon>Rubus</taxon>
    </lineage>
</organism>
<feature type="chain" id="PRO_0000424287" description="Inactive polyketide synthase 2">
    <location>
        <begin position="1"/>
        <end position="391"/>
    </location>
</feature>
<feature type="active site" evidence="2">
    <location>
        <position position="164"/>
    </location>
</feature>
<evidence type="ECO:0000250" key="1"/>
<evidence type="ECO:0000255" key="2">
    <source>
        <dbReference type="PROSITE-ProRule" id="PRU10023"/>
    </source>
</evidence>
<evidence type="ECO:0000305" key="3"/>
<dbReference type="EMBL" id="AF292368">
    <property type="protein sequence ID" value="AAK15175.1"/>
    <property type="molecule type" value="Genomic_DNA"/>
</dbReference>
<dbReference type="SMR" id="Q9AU10"/>
<dbReference type="GO" id="GO:0016747">
    <property type="term" value="F:acyltransferase activity, transferring groups other than amino-acyl groups"/>
    <property type="evidence" value="ECO:0007669"/>
    <property type="project" value="InterPro"/>
</dbReference>
<dbReference type="GO" id="GO:0042803">
    <property type="term" value="F:protein homodimerization activity"/>
    <property type="evidence" value="ECO:0000250"/>
    <property type="project" value="UniProtKB"/>
</dbReference>
<dbReference type="GO" id="GO:0030639">
    <property type="term" value="P:polyketide biosynthetic process"/>
    <property type="evidence" value="ECO:0007669"/>
    <property type="project" value="TreeGrafter"/>
</dbReference>
<dbReference type="CDD" id="cd00831">
    <property type="entry name" value="CHS_like"/>
    <property type="match status" value="1"/>
</dbReference>
<dbReference type="FunFam" id="3.40.47.10:FF:000014">
    <property type="entry name" value="Chalcone synthase 1"/>
    <property type="match status" value="1"/>
</dbReference>
<dbReference type="FunFam" id="3.40.47.10:FF:000025">
    <property type="entry name" value="Chalcone synthase 2"/>
    <property type="match status" value="1"/>
</dbReference>
<dbReference type="Gene3D" id="3.40.47.10">
    <property type="match status" value="2"/>
</dbReference>
<dbReference type="InterPro" id="IPR012328">
    <property type="entry name" value="Chalcone/stilbene_synt_C"/>
</dbReference>
<dbReference type="InterPro" id="IPR001099">
    <property type="entry name" value="Chalcone/stilbene_synt_N"/>
</dbReference>
<dbReference type="InterPro" id="IPR018088">
    <property type="entry name" value="Chalcone/stilbene_synthase_AS"/>
</dbReference>
<dbReference type="InterPro" id="IPR011141">
    <property type="entry name" value="Polyketide_synthase_type-III"/>
</dbReference>
<dbReference type="InterPro" id="IPR016039">
    <property type="entry name" value="Thiolase-like"/>
</dbReference>
<dbReference type="PANTHER" id="PTHR11877:SF80">
    <property type="entry name" value="CHALCONE SYNTHASE 1"/>
    <property type="match status" value="1"/>
</dbReference>
<dbReference type="PANTHER" id="PTHR11877">
    <property type="entry name" value="HYDROXYMETHYLGLUTARYL-COA SYNTHASE"/>
    <property type="match status" value="1"/>
</dbReference>
<dbReference type="Pfam" id="PF02797">
    <property type="entry name" value="Chal_sti_synt_C"/>
    <property type="match status" value="1"/>
</dbReference>
<dbReference type="Pfam" id="PF00195">
    <property type="entry name" value="Chal_sti_synt_N"/>
    <property type="match status" value="1"/>
</dbReference>
<dbReference type="PIRSF" id="PIRSF000451">
    <property type="entry name" value="PKS_III"/>
    <property type="match status" value="1"/>
</dbReference>
<dbReference type="SUPFAM" id="SSF53901">
    <property type="entry name" value="Thiolase-like"/>
    <property type="match status" value="2"/>
</dbReference>
<dbReference type="PROSITE" id="PS00441">
    <property type="entry name" value="CHALCONE_SYNTH"/>
    <property type="match status" value="1"/>
</dbReference>
<proteinExistence type="inferred from homology"/>
<comment type="subunit">
    <text evidence="1">Homodimer.</text>
</comment>
<comment type="similarity">
    <text evidence="3">Belongs to the thiolase-like superfamily. Chalcone/stilbene synthases family.</text>
</comment>
<comment type="caution">
    <text evidence="3">According to PubMed:11437245, PKS2 has no polyketide synthase activity.</text>
</comment>
<sequence>MVTVDEVRKAQRAEGPATILAIGTATPPNCVDQSTYPDYYFRITKSEHRTELKEKFQRMCDKSRIKKRYMYLTEEILKENPSMCEYMAPSLDARQDMVVVEIPKLGKEAATKAIKEWGQLKSKITHLVFCTTSGVDMPGADYQLTKLLGLRPSVKRLMMYQQGCFAGGTVLRLAKDLAENNKGARVLAVCSEITAVTFRGPSDTHLDSLVGQALFGDGAAAIIVGSDPLPDIERPLFELVSAAQTILPDSDGAIDGHLHEVGLTFHLLKDVPGLISKNIEKSLNEAFKPLDITDWNSLFWIAHPGGPAILDQVEAKLGLKPEKLEATRNILSEYGNMSSACVLLILDEVRRKSVANGHKTTGEGLEWGVLFGFGPGLTVETVVLHSVAAST</sequence>
<reference key="1">
    <citation type="journal article" date="2001" name="Plant Mol. Biol.">
        <title>Molecular and biochemical characterization of three aromatic polyketide synthase genes from Rubus idaeus.</title>
        <authorList>
            <person name="Zheng D."/>
            <person name="Schroder G."/>
            <person name="Schroder J."/>
            <person name="Hrazdina G."/>
        </authorList>
    </citation>
    <scope>NUCLEOTIDE SEQUENCE [GENOMIC DNA]</scope>
    <source>
        <strain>cv. Royalty</strain>
    </source>
</reference>
<protein>
    <recommendedName>
        <fullName>Inactive polyketide synthase 2</fullName>
        <shortName>RiPKS2</shortName>
    </recommendedName>
    <alternativeName>
        <fullName>Inactive naringenin-chalcone synthase PKS2</fullName>
    </alternativeName>
</protein>
<gene>
    <name type="primary">PKS2</name>
</gene>
<name>PKS2_RUBID</name>